<keyword id="KW-0067">ATP-binding</keyword>
<keyword id="KW-0133">Cell shape</keyword>
<keyword id="KW-0961">Cell wall biogenesis/degradation</keyword>
<keyword id="KW-0963">Cytoplasm</keyword>
<keyword id="KW-0436">Ligase</keyword>
<keyword id="KW-0460">Magnesium</keyword>
<keyword id="KW-0464">Manganese</keyword>
<keyword id="KW-0547">Nucleotide-binding</keyword>
<keyword id="KW-0573">Peptidoglycan synthesis</keyword>
<protein>
    <recommendedName>
        <fullName>D-alanine--D-alanine ligase</fullName>
        <ecNumber>6.3.2.4</ecNumber>
    </recommendedName>
    <alternativeName>
        <fullName>D-Ala-D-Ala ligase</fullName>
    </alternativeName>
    <alternativeName>
        <fullName>D-alanylalanine synthetase</fullName>
    </alternativeName>
</protein>
<feature type="chain" id="PRO_0000177778" description="D-alanine--D-alanine ligase">
    <location>
        <begin position="1"/>
        <end position="205" status="greater than"/>
    </location>
</feature>
<feature type="domain" description="ATP-grasp" evidence="2">
    <location>
        <begin position="111"/>
        <end position="205" status="greater than"/>
    </location>
</feature>
<feature type="binding site" evidence="2">
    <location>
        <begin position="139"/>
        <end position="190"/>
    </location>
    <ligand>
        <name>ATP</name>
        <dbReference type="ChEBI" id="CHEBI:30616"/>
    </ligand>
</feature>
<feature type="non-terminal residue">
    <location>
        <position position="205"/>
    </location>
</feature>
<name>DDL_ANACE</name>
<organism>
    <name type="scientific">Anaplasma centrale</name>
    <dbReference type="NCBI Taxonomy" id="769"/>
    <lineage>
        <taxon>Bacteria</taxon>
        <taxon>Pseudomonadati</taxon>
        <taxon>Pseudomonadota</taxon>
        <taxon>Alphaproteobacteria</taxon>
        <taxon>Rickettsiales</taxon>
        <taxon>Anaplasmataceae</taxon>
        <taxon>Anaplasma</taxon>
    </lineage>
</organism>
<dbReference type="EC" id="6.3.2.4"/>
<dbReference type="EMBL" id="M80425">
    <property type="protein sequence ID" value="AAA22065.1"/>
    <property type="molecule type" value="Genomic_DNA"/>
</dbReference>
<dbReference type="PIR" id="PQ0272">
    <property type="entry name" value="PQ0272"/>
</dbReference>
<dbReference type="SMR" id="P35660"/>
<dbReference type="UniPathway" id="UPA00219"/>
<dbReference type="GO" id="GO:0005737">
    <property type="term" value="C:cytoplasm"/>
    <property type="evidence" value="ECO:0007669"/>
    <property type="project" value="UniProtKB-SubCell"/>
</dbReference>
<dbReference type="GO" id="GO:0005524">
    <property type="term" value="F:ATP binding"/>
    <property type="evidence" value="ECO:0007669"/>
    <property type="project" value="UniProtKB-KW"/>
</dbReference>
<dbReference type="GO" id="GO:0008716">
    <property type="term" value="F:D-alanine-D-alanine ligase activity"/>
    <property type="evidence" value="ECO:0007669"/>
    <property type="project" value="UniProtKB-EC"/>
</dbReference>
<dbReference type="GO" id="GO:0046872">
    <property type="term" value="F:metal ion binding"/>
    <property type="evidence" value="ECO:0007669"/>
    <property type="project" value="InterPro"/>
</dbReference>
<dbReference type="GO" id="GO:0071555">
    <property type="term" value="P:cell wall organization"/>
    <property type="evidence" value="ECO:0007669"/>
    <property type="project" value="UniProtKB-KW"/>
</dbReference>
<dbReference type="GO" id="GO:0009252">
    <property type="term" value="P:peptidoglycan biosynthetic process"/>
    <property type="evidence" value="ECO:0007669"/>
    <property type="project" value="UniProtKB-UniPathway"/>
</dbReference>
<dbReference type="GO" id="GO:0008360">
    <property type="term" value="P:regulation of cell shape"/>
    <property type="evidence" value="ECO:0007669"/>
    <property type="project" value="UniProtKB-KW"/>
</dbReference>
<dbReference type="Gene3D" id="3.40.50.20">
    <property type="match status" value="1"/>
</dbReference>
<dbReference type="Gene3D" id="3.30.1490.20">
    <property type="entry name" value="ATP-grasp fold, A domain"/>
    <property type="match status" value="1"/>
</dbReference>
<dbReference type="Gene3D" id="3.30.470.20">
    <property type="entry name" value="ATP-grasp fold, B domain"/>
    <property type="match status" value="1"/>
</dbReference>
<dbReference type="InterPro" id="IPR011761">
    <property type="entry name" value="ATP-grasp"/>
</dbReference>
<dbReference type="InterPro" id="IPR013815">
    <property type="entry name" value="ATP_grasp_subdomain_1"/>
</dbReference>
<dbReference type="InterPro" id="IPR000291">
    <property type="entry name" value="D-Ala_lig_Van_CS"/>
</dbReference>
<dbReference type="InterPro" id="IPR011095">
    <property type="entry name" value="Dala_Dala_lig_C"/>
</dbReference>
<dbReference type="InterPro" id="IPR016185">
    <property type="entry name" value="PreATP-grasp_dom_sf"/>
</dbReference>
<dbReference type="PANTHER" id="PTHR23132">
    <property type="entry name" value="D-ALANINE--D-ALANINE LIGASE"/>
    <property type="match status" value="1"/>
</dbReference>
<dbReference type="PANTHER" id="PTHR23132:SF23">
    <property type="entry name" value="D-ALANINE--D-ALANINE LIGASE B"/>
    <property type="match status" value="1"/>
</dbReference>
<dbReference type="Pfam" id="PF07478">
    <property type="entry name" value="Dala_Dala_lig_C"/>
    <property type="match status" value="1"/>
</dbReference>
<dbReference type="SUPFAM" id="SSF56059">
    <property type="entry name" value="Glutathione synthetase ATP-binding domain-like"/>
    <property type="match status" value="1"/>
</dbReference>
<dbReference type="SUPFAM" id="SSF52440">
    <property type="entry name" value="PreATP-grasp domain"/>
    <property type="match status" value="1"/>
</dbReference>
<dbReference type="PROSITE" id="PS50975">
    <property type="entry name" value="ATP_GRASP"/>
    <property type="match status" value="1"/>
</dbReference>
<dbReference type="PROSITE" id="PS00843">
    <property type="entry name" value="DALA_DALA_LIGASE_1"/>
    <property type="match status" value="1"/>
</dbReference>
<proteinExistence type="inferred from homology"/>
<gene>
    <name type="primary">ddl</name>
</gene>
<sequence>MPVGLACNADDVLSIAVLCGGSSPEREVSLAGGKRIADALGRLGHRAAVVDLNRESAHQLLAMAPDLVYNALHGGQGEDGCASGLLDILGLAYTHSRVAASSVGMDKVLTKHVLKSLGIDFPEFSVLTKEEVLSAKEVMPYPFVIKPICGGSTIGVHAIFSRSEYLDLSVHADALEGRMLVEEYIPGQEVHTAVFLGRAIGTMEF</sequence>
<comment type="function">
    <text>Cell wall formation.</text>
</comment>
<comment type="catalytic activity">
    <reaction>
        <text>2 D-alanine + ATP = D-alanyl-D-alanine + ADP + phosphate + H(+)</text>
        <dbReference type="Rhea" id="RHEA:11224"/>
        <dbReference type="ChEBI" id="CHEBI:15378"/>
        <dbReference type="ChEBI" id="CHEBI:30616"/>
        <dbReference type="ChEBI" id="CHEBI:43474"/>
        <dbReference type="ChEBI" id="CHEBI:57416"/>
        <dbReference type="ChEBI" id="CHEBI:57822"/>
        <dbReference type="ChEBI" id="CHEBI:456216"/>
        <dbReference type="EC" id="6.3.2.4"/>
    </reaction>
</comment>
<comment type="cofactor">
    <cofactor evidence="1">
        <name>Mg(2+)</name>
        <dbReference type="ChEBI" id="CHEBI:18420"/>
    </cofactor>
    <cofactor evidence="1">
        <name>Mn(2+)</name>
        <dbReference type="ChEBI" id="CHEBI:29035"/>
    </cofactor>
    <text evidence="1">Binds 2 magnesium or manganese ions per subunit.</text>
</comment>
<comment type="pathway">
    <text>Cell wall biogenesis; peptidoglycan biosynthesis.</text>
</comment>
<comment type="subcellular location">
    <subcellularLocation>
        <location evidence="1">Cytoplasm</location>
    </subcellularLocation>
</comment>
<comment type="similarity">
    <text evidence="3">Belongs to the D-alanine--D-alanine ligase family.</text>
</comment>
<evidence type="ECO:0000250" key="1"/>
<evidence type="ECO:0000255" key="2">
    <source>
        <dbReference type="PROSITE-ProRule" id="PRU00409"/>
    </source>
</evidence>
<evidence type="ECO:0000305" key="3"/>
<accession>P35660</accession>
<reference key="1">
    <citation type="journal article" date="1992" name="Biochem. Biophys. Res. Commun.">
        <title>Sequence of a putative glutathione synthetase II gene and flanking regions from Anaplasma centrale.</title>
        <authorList>
            <person name="Peters J.M."/>
            <person name="Dalrymple B.P."/>
            <person name="Jorgensen W.K."/>
        </authorList>
    </citation>
    <scope>NUCLEOTIDE SEQUENCE [GENOMIC DNA]</scope>
</reference>